<accession>Q47J79</accession>
<dbReference type="EMBL" id="CP000089">
    <property type="protein sequence ID" value="AAZ45102.1"/>
    <property type="molecule type" value="Genomic_DNA"/>
</dbReference>
<dbReference type="SMR" id="Q47J79"/>
<dbReference type="STRING" id="159087.Daro_0343"/>
<dbReference type="KEGG" id="dar:Daro_0343"/>
<dbReference type="eggNOG" id="COG0100">
    <property type="taxonomic scope" value="Bacteria"/>
</dbReference>
<dbReference type="HOGENOM" id="CLU_072439_5_0_4"/>
<dbReference type="OrthoDB" id="9806415at2"/>
<dbReference type="GO" id="GO:1990904">
    <property type="term" value="C:ribonucleoprotein complex"/>
    <property type="evidence" value="ECO:0007669"/>
    <property type="project" value="UniProtKB-KW"/>
</dbReference>
<dbReference type="GO" id="GO:0005840">
    <property type="term" value="C:ribosome"/>
    <property type="evidence" value="ECO:0007669"/>
    <property type="project" value="UniProtKB-KW"/>
</dbReference>
<dbReference type="GO" id="GO:0019843">
    <property type="term" value="F:rRNA binding"/>
    <property type="evidence" value="ECO:0007669"/>
    <property type="project" value="UniProtKB-UniRule"/>
</dbReference>
<dbReference type="GO" id="GO:0003735">
    <property type="term" value="F:structural constituent of ribosome"/>
    <property type="evidence" value="ECO:0007669"/>
    <property type="project" value="InterPro"/>
</dbReference>
<dbReference type="GO" id="GO:0006412">
    <property type="term" value="P:translation"/>
    <property type="evidence" value="ECO:0007669"/>
    <property type="project" value="UniProtKB-UniRule"/>
</dbReference>
<dbReference type="FunFam" id="3.30.420.80:FF:000001">
    <property type="entry name" value="30S ribosomal protein S11"/>
    <property type="match status" value="1"/>
</dbReference>
<dbReference type="Gene3D" id="3.30.420.80">
    <property type="entry name" value="Ribosomal protein S11"/>
    <property type="match status" value="1"/>
</dbReference>
<dbReference type="HAMAP" id="MF_01310">
    <property type="entry name" value="Ribosomal_uS11"/>
    <property type="match status" value="1"/>
</dbReference>
<dbReference type="InterPro" id="IPR001971">
    <property type="entry name" value="Ribosomal_uS11"/>
</dbReference>
<dbReference type="InterPro" id="IPR019981">
    <property type="entry name" value="Ribosomal_uS11_bac-type"/>
</dbReference>
<dbReference type="InterPro" id="IPR018102">
    <property type="entry name" value="Ribosomal_uS11_CS"/>
</dbReference>
<dbReference type="InterPro" id="IPR036967">
    <property type="entry name" value="Ribosomal_uS11_sf"/>
</dbReference>
<dbReference type="NCBIfam" id="NF003698">
    <property type="entry name" value="PRK05309.1"/>
    <property type="match status" value="1"/>
</dbReference>
<dbReference type="NCBIfam" id="TIGR03632">
    <property type="entry name" value="uS11_bact"/>
    <property type="match status" value="1"/>
</dbReference>
<dbReference type="PANTHER" id="PTHR11759">
    <property type="entry name" value="40S RIBOSOMAL PROTEIN S14/30S RIBOSOMAL PROTEIN S11"/>
    <property type="match status" value="1"/>
</dbReference>
<dbReference type="Pfam" id="PF00411">
    <property type="entry name" value="Ribosomal_S11"/>
    <property type="match status" value="1"/>
</dbReference>
<dbReference type="PIRSF" id="PIRSF002131">
    <property type="entry name" value="Ribosomal_S11"/>
    <property type="match status" value="1"/>
</dbReference>
<dbReference type="SUPFAM" id="SSF53137">
    <property type="entry name" value="Translational machinery components"/>
    <property type="match status" value="1"/>
</dbReference>
<dbReference type="PROSITE" id="PS00054">
    <property type="entry name" value="RIBOSOMAL_S11"/>
    <property type="match status" value="1"/>
</dbReference>
<gene>
    <name evidence="1" type="primary">rpsK</name>
    <name type="ordered locus">Daro_0343</name>
</gene>
<proteinExistence type="inferred from homology"/>
<name>RS11_DECAR</name>
<keyword id="KW-0687">Ribonucleoprotein</keyword>
<keyword id="KW-0689">Ribosomal protein</keyword>
<keyword id="KW-0694">RNA-binding</keyword>
<keyword id="KW-0699">rRNA-binding</keyword>
<feature type="chain" id="PRO_0000230399" description="Small ribosomal subunit protein uS11">
    <location>
        <begin position="1"/>
        <end position="129"/>
    </location>
</feature>
<protein>
    <recommendedName>
        <fullName evidence="1">Small ribosomal subunit protein uS11</fullName>
    </recommendedName>
    <alternativeName>
        <fullName evidence="2">30S ribosomal protein S11</fullName>
    </alternativeName>
</protein>
<sequence length="129" mass="13557">MAKTATKVRKKVKKNVAEGIAHIHASFNNTIITITDRQGNALSWATSGGAGFRGSRKSTPFAAQVAAEAAGKAAQECGVKNVEVRIKGPGPGRESSVRALNALGMKITSISDVTPVPHNGCRPPKKRRI</sequence>
<comment type="function">
    <text evidence="1">Located on the platform of the 30S subunit, it bridges several disparate RNA helices of the 16S rRNA. Forms part of the Shine-Dalgarno cleft in the 70S ribosome.</text>
</comment>
<comment type="subunit">
    <text evidence="1">Part of the 30S ribosomal subunit. Interacts with proteins S7 and S18. Binds to IF-3.</text>
</comment>
<comment type="similarity">
    <text evidence="1">Belongs to the universal ribosomal protein uS11 family.</text>
</comment>
<organism>
    <name type="scientific">Dechloromonas aromatica (strain RCB)</name>
    <dbReference type="NCBI Taxonomy" id="159087"/>
    <lineage>
        <taxon>Bacteria</taxon>
        <taxon>Pseudomonadati</taxon>
        <taxon>Pseudomonadota</taxon>
        <taxon>Betaproteobacteria</taxon>
        <taxon>Rhodocyclales</taxon>
        <taxon>Azonexaceae</taxon>
        <taxon>Dechloromonas</taxon>
    </lineage>
</organism>
<evidence type="ECO:0000255" key="1">
    <source>
        <dbReference type="HAMAP-Rule" id="MF_01310"/>
    </source>
</evidence>
<evidence type="ECO:0000305" key="2"/>
<reference key="1">
    <citation type="journal article" date="2009" name="BMC Genomics">
        <title>Metabolic analysis of the soil microbe Dechloromonas aromatica str. RCB: indications of a surprisingly complex life-style and cryptic anaerobic pathways for aromatic degradation.</title>
        <authorList>
            <person name="Salinero K.K."/>
            <person name="Keller K."/>
            <person name="Feil W.S."/>
            <person name="Feil H."/>
            <person name="Trong S."/>
            <person name="Di Bartolo G."/>
            <person name="Lapidus A."/>
        </authorList>
    </citation>
    <scope>NUCLEOTIDE SEQUENCE [LARGE SCALE GENOMIC DNA]</scope>
    <source>
        <strain>RCB</strain>
    </source>
</reference>